<keyword id="KW-0049">Antioxidant</keyword>
<keyword id="KW-0186">Copper</keyword>
<keyword id="KW-0963">Cytoplasm</keyword>
<keyword id="KW-1015">Disulfide bond</keyword>
<keyword id="KW-0479">Metal-binding</keyword>
<keyword id="KW-0560">Oxidoreductase</keyword>
<keyword id="KW-1185">Reference proteome</keyword>
<keyword id="KW-0862">Zinc</keyword>
<accession>Q6C662</accession>
<dbReference type="EC" id="1.15.1.1" evidence="3"/>
<dbReference type="EMBL" id="CR382131">
    <property type="protein sequence ID" value="CAG79443.1"/>
    <property type="molecule type" value="Genomic_DNA"/>
</dbReference>
<dbReference type="RefSeq" id="XP_503850.1">
    <property type="nucleotide sequence ID" value="XM_503850.1"/>
</dbReference>
<dbReference type="SMR" id="Q6C662"/>
<dbReference type="FunCoup" id="Q6C662">
    <property type="interactions" value="817"/>
</dbReference>
<dbReference type="STRING" id="284591.Q6C662"/>
<dbReference type="EnsemblFungi" id="CAG79443">
    <property type="protein sequence ID" value="CAG79443"/>
    <property type="gene ID" value="YALI0_E12133g"/>
</dbReference>
<dbReference type="KEGG" id="yli:2912814"/>
<dbReference type="VEuPathDB" id="FungiDB:YALI0_E12133g"/>
<dbReference type="HOGENOM" id="CLU_056632_4_1_1"/>
<dbReference type="InParanoid" id="Q6C662"/>
<dbReference type="OMA" id="AQRGFHI"/>
<dbReference type="OrthoDB" id="32196at4891"/>
<dbReference type="Proteomes" id="UP000001300">
    <property type="component" value="Chromosome E"/>
</dbReference>
<dbReference type="GO" id="GO:0005737">
    <property type="term" value="C:cytoplasm"/>
    <property type="evidence" value="ECO:0007669"/>
    <property type="project" value="UniProtKB-SubCell"/>
</dbReference>
<dbReference type="GO" id="GO:0005507">
    <property type="term" value="F:copper ion binding"/>
    <property type="evidence" value="ECO:0000318"/>
    <property type="project" value="GO_Central"/>
</dbReference>
<dbReference type="GO" id="GO:0004784">
    <property type="term" value="F:superoxide dismutase activity"/>
    <property type="evidence" value="ECO:0000318"/>
    <property type="project" value="GO_Central"/>
</dbReference>
<dbReference type="GO" id="GO:0045454">
    <property type="term" value="P:cell redox homeostasis"/>
    <property type="evidence" value="ECO:0007669"/>
    <property type="project" value="EnsemblFungi"/>
</dbReference>
<dbReference type="GO" id="GO:0006882">
    <property type="term" value="P:intracellular zinc ion homeostasis"/>
    <property type="evidence" value="ECO:0007669"/>
    <property type="project" value="EnsemblFungi"/>
</dbReference>
<dbReference type="GO" id="GO:0019430">
    <property type="term" value="P:removal of superoxide radicals"/>
    <property type="evidence" value="ECO:0000318"/>
    <property type="project" value="GO_Central"/>
</dbReference>
<dbReference type="CDD" id="cd00305">
    <property type="entry name" value="Cu-Zn_Superoxide_Dismutase"/>
    <property type="match status" value="1"/>
</dbReference>
<dbReference type="FunFam" id="2.60.40.200:FF:000001">
    <property type="entry name" value="Superoxide dismutase [Cu-Zn]"/>
    <property type="match status" value="1"/>
</dbReference>
<dbReference type="Gene3D" id="2.60.40.200">
    <property type="entry name" value="Superoxide dismutase, copper/zinc binding domain"/>
    <property type="match status" value="1"/>
</dbReference>
<dbReference type="InterPro" id="IPR036423">
    <property type="entry name" value="SOD-like_Cu/Zn_dom_sf"/>
</dbReference>
<dbReference type="InterPro" id="IPR024134">
    <property type="entry name" value="SOD_Cu/Zn_/chaperone"/>
</dbReference>
<dbReference type="InterPro" id="IPR018152">
    <property type="entry name" value="SOD_Cu/Zn_BS"/>
</dbReference>
<dbReference type="InterPro" id="IPR001424">
    <property type="entry name" value="SOD_Cu_Zn_dom"/>
</dbReference>
<dbReference type="PANTHER" id="PTHR10003">
    <property type="entry name" value="SUPEROXIDE DISMUTASE CU-ZN -RELATED"/>
    <property type="match status" value="1"/>
</dbReference>
<dbReference type="Pfam" id="PF00080">
    <property type="entry name" value="Sod_Cu"/>
    <property type="match status" value="1"/>
</dbReference>
<dbReference type="PRINTS" id="PR00068">
    <property type="entry name" value="CUZNDISMTASE"/>
</dbReference>
<dbReference type="SUPFAM" id="SSF49329">
    <property type="entry name" value="Cu,Zn superoxide dismutase-like"/>
    <property type="match status" value="1"/>
</dbReference>
<dbReference type="PROSITE" id="PS00087">
    <property type="entry name" value="SOD_CU_ZN_1"/>
    <property type="match status" value="1"/>
</dbReference>
<dbReference type="PROSITE" id="PS00332">
    <property type="entry name" value="SOD_CU_ZN_2"/>
    <property type="match status" value="1"/>
</dbReference>
<gene>
    <name type="primary">SOD1</name>
    <name type="ordered locus">YALI0E12133g</name>
</gene>
<proteinExistence type="inferred from homology"/>
<comment type="function">
    <text evidence="1">Destroys radicals which are normally produced within the cells and which are toxic to biological systems.</text>
</comment>
<comment type="catalytic activity">
    <reaction evidence="3">
        <text>2 superoxide + 2 H(+) = H2O2 + O2</text>
        <dbReference type="Rhea" id="RHEA:20696"/>
        <dbReference type="ChEBI" id="CHEBI:15378"/>
        <dbReference type="ChEBI" id="CHEBI:15379"/>
        <dbReference type="ChEBI" id="CHEBI:16240"/>
        <dbReference type="ChEBI" id="CHEBI:18421"/>
        <dbReference type="EC" id="1.15.1.1"/>
    </reaction>
</comment>
<comment type="cofactor">
    <cofactor evidence="2">
        <name>Cu cation</name>
        <dbReference type="ChEBI" id="CHEBI:23378"/>
    </cofactor>
    <text evidence="2">Binds 1 copper ion per subunit.</text>
</comment>
<comment type="cofactor">
    <cofactor evidence="2">
        <name>Zn(2+)</name>
        <dbReference type="ChEBI" id="CHEBI:29105"/>
    </cofactor>
    <text evidence="2">Binds 1 zinc ion per subunit.</text>
</comment>
<comment type="subunit">
    <text evidence="3">Homodimer.</text>
</comment>
<comment type="subcellular location">
    <subcellularLocation>
        <location evidence="2">Cytoplasm</location>
    </subcellularLocation>
</comment>
<comment type="similarity">
    <text evidence="5">Belongs to the Cu-Zn superoxide dismutase family.</text>
</comment>
<evidence type="ECO:0000250" key="1">
    <source>
        <dbReference type="UniProtKB" id="P00442"/>
    </source>
</evidence>
<evidence type="ECO:0000250" key="2">
    <source>
        <dbReference type="UniProtKB" id="P00445"/>
    </source>
</evidence>
<evidence type="ECO:0000250" key="3">
    <source>
        <dbReference type="UniProtKB" id="P85978"/>
    </source>
</evidence>
<evidence type="ECO:0000256" key="4">
    <source>
        <dbReference type="SAM" id="MobiDB-lite"/>
    </source>
</evidence>
<evidence type="ECO:0000305" key="5"/>
<reference key="1">
    <citation type="journal article" date="2004" name="Nature">
        <title>Genome evolution in yeasts.</title>
        <authorList>
            <person name="Dujon B."/>
            <person name="Sherman D."/>
            <person name="Fischer G."/>
            <person name="Durrens P."/>
            <person name="Casaregola S."/>
            <person name="Lafontaine I."/>
            <person name="de Montigny J."/>
            <person name="Marck C."/>
            <person name="Neuveglise C."/>
            <person name="Talla E."/>
            <person name="Goffard N."/>
            <person name="Frangeul L."/>
            <person name="Aigle M."/>
            <person name="Anthouard V."/>
            <person name="Babour A."/>
            <person name="Barbe V."/>
            <person name="Barnay S."/>
            <person name="Blanchin S."/>
            <person name="Beckerich J.-M."/>
            <person name="Beyne E."/>
            <person name="Bleykasten C."/>
            <person name="Boisrame A."/>
            <person name="Boyer J."/>
            <person name="Cattolico L."/>
            <person name="Confanioleri F."/>
            <person name="de Daruvar A."/>
            <person name="Despons L."/>
            <person name="Fabre E."/>
            <person name="Fairhead C."/>
            <person name="Ferry-Dumazet H."/>
            <person name="Groppi A."/>
            <person name="Hantraye F."/>
            <person name="Hennequin C."/>
            <person name="Jauniaux N."/>
            <person name="Joyet P."/>
            <person name="Kachouri R."/>
            <person name="Kerrest A."/>
            <person name="Koszul R."/>
            <person name="Lemaire M."/>
            <person name="Lesur I."/>
            <person name="Ma L."/>
            <person name="Muller H."/>
            <person name="Nicaud J.-M."/>
            <person name="Nikolski M."/>
            <person name="Oztas S."/>
            <person name="Ozier-Kalogeropoulos O."/>
            <person name="Pellenz S."/>
            <person name="Potier S."/>
            <person name="Richard G.-F."/>
            <person name="Straub M.-L."/>
            <person name="Suleau A."/>
            <person name="Swennen D."/>
            <person name="Tekaia F."/>
            <person name="Wesolowski-Louvel M."/>
            <person name="Westhof E."/>
            <person name="Wirth B."/>
            <person name="Zeniou-Meyer M."/>
            <person name="Zivanovic Y."/>
            <person name="Bolotin-Fukuhara M."/>
            <person name="Thierry A."/>
            <person name="Bouchier C."/>
            <person name="Caudron B."/>
            <person name="Scarpelli C."/>
            <person name="Gaillardin C."/>
            <person name="Weissenbach J."/>
            <person name="Wincker P."/>
            <person name="Souciet J.-L."/>
        </authorList>
    </citation>
    <scope>NUCLEOTIDE SEQUENCE [LARGE SCALE GENOMIC DNA]</scope>
    <source>
        <strain>CLIB 122 / E 150</strain>
    </source>
</reference>
<feature type="initiator methionine" description="Removed" evidence="2">
    <location>
        <position position="1"/>
    </location>
</feature>
<feature type="chain" id="PRO_0000164128" description="Superoxide dismutase [Cu-Zn]">
    <location>
        <begin position="2"/>
        <end position="154"/>
    </location>
</feature>
<feature type="region of interest" description="Disordered" evidence="4">
    <location>
        <begin position="62"/>
        <end position="89"/>
    </location>
</feature>
<feature type="binding site" evidence="2">
    <location>
        <position position="47"/>
    </location>
    <ligand>
        <name>Cu cation</name>
        <dbReference type="ChEBI" id="CHEBI:23378"/>
        <note>catalytic</note>
    </ligand>
</feature>
<feature type="binding site" evidence="2">
    <location>
        <position position="49"/>
    </location>
    <ligand>
        <name>Cu cation</name>
        <dbReference type="ChEBI" id="CHEBI:23378"/>
        <note>catalytic</note>
    </ligand>
</feature>
<feature type="binding site" evidence="2">
    <location>
        <position position="64"/>
    </location>
    <ligand>
        <name>Cu cation</name>
        <dbReference type="ChEBI" id="CHEBI:23378"/>
        <note>catalytic</note>
    </ligand>
</feature>
<feature type="binding site" evidence="2">
    <location>
        <position position="64"/>
    </location>
    <ligand>
        <name>Zn(2+)</name>
        <dbReference type="ChEBI" id="CHEBI:29105"/>
        <note>structural</note>
    </ligand>
</feature>
<feature type="binding site" evidence="2">
    <location>
        <position position="72"/>
    </location>
    <ligand>
        <name>Zn(2+)</name>
        <dbReference type="ChEBI" id="CHEBI:29105"/>
        <note>structural</note>
    </ligand>
</feature>
<feature type="binding site" evidence="2">
    <location>
        <position position="81"/>
    </location>
    <ligand>
        <name>Zn(2+)</name>
        <dbReference type="ChEBI" id="CHEBI:29105"/>
        <note>structural</note>
    </ligand>
</feature>
<feature type="binding site" evidence="2">
    <location>
        <position position="84"/>
    </location>
    <ligand>
        <name>Zn(2+)</name>
        <dbReference type="ChEBI" id="CHEBI:29105"/>
        <note>structural</note>
    </ligand>
</feature>
<feature type="binding site" evidence="2">
    <location>
        <position position="121"/>
    </location>
    <ligand>
        <name>Cu cation</name>
        <dbReference type="ChEBI" id="CHEBI:23378"/>
        <note>catalytic</note>
    </ligand>
</feature>
<feature type="binding site" evidence="2">
    <location>
        <position position="144"/>
    </location>
    <ligand>
        <name>substrate</name>
    </ligand>
</feature>
<feature type="disulfide bond" evidence="2">
    <location>
        <begin position="58"/>
        <end position="147"/>
    </location>
</feature>
<protein>
    <recommendedName>
        <fullName>Superoxide dismutase [Cu-Zn]</fullName>
        <ecNumber evidence="3">1.15.1.1</ecNumber>
    </recommendedName>
</protein>
<organism>
    <name type="scientific">Yarrowia lipolytica (strain CLIB 122 / E 150)</name>
    <name type="common">Yeast</name>
    <name type="synonym">Candida lipolytica</name>
    <dbReference type="NCBI Taxonomy" id="284591"/>
    <lineage>
        <taxon>Eukaryota</taxon>
        <taxon>Fungi</taxon>
        <taxon>Dikarya</taxon>
        <taxon>Ascomycota</taxon>
        <taxon>Saccharomycotina</taxon>
        <taxon>Dipodascomycetes</taxon>
        <taxon>Dipodascales</taxon>
        <taxon>Dipodascales incertae sedis</taxon>
        <taxon>Yarrowia</taxon>
    </lineage>
</organism>
<sequence>MVKAVAVLRGDSKVSGTVTFEQDSESGPVTVTYDIKGNDPNAERGFHVHEFGDNTNGCTSAGPHFNPFKKNHGGPTDSERHVGDLGNVKTDSEGVAKGVLKDSLLKLTGDNSIVGRTVVIHGGEDDLGKGGHADSLKTGNAGPRPACGVIGLTA</sequence>
<name>SODC_YARLI</name>